<name>Y1230_BORA1</name>
<proteinExistence type="inferred from homology"/>
<protein>
    <recommendedName>
        <fullName evidence="1">UPF0391 membrane protein BAV1230</fullName>
    </recommendedName>
</protein>
<sequence length="54" mass="5561">MLYYAAVFFVIALIAAVLGFGGIAAGAAGIAKILFFVFLVLALLSVLSGALRKK</sequence>
<reference key="1">
    <citation type="journal article" date="2006" name="J. Bacteriol.">
        <title>Comparison of the genome sequence of the poultry pathogen Bordetella avium with those of B. bronchiseptica, B. pertussis, and B. parapertussis reveals extensive diversity in surface structures associated with host interaction.</title>
        <authorList>
            <person name="Sebaihia M."/>
            <person name="Preston A."/>
            <person name="Maskell D.J."/>
            <person name="Kuzmiak H."/>
            <person name="Connell T.D."/>
            <person name="King N.D."/>
            <person name="Orndorff P.E."/>
            <person name="Miyamoto D.M."/>
            <person name="Thomson N.R."/>
            <person name="Harris D."/>
            <person name="Goble A."/>
            <person name="Lord A."/>
            <person name="Murphy L."/>
            <person name="Quail M.A."/>
            <person name="Rutter S."/>
            <person name="Squares R."/>
            <person name="Squares S."/>
            <person name="Woodward J."/>
            <person name="Parkhill J."/>
            <person name="Temple L.M."/>
        </authorList>
    </citation>
    <scope>NUCLEOTIDE SEQUENCE [LARGE SCALE GENOMIC DNA]</scope>
    <source>
        <strain>197N</strain>
    </source>
</reference>
<feature type="chain" id="PRO_0000256712" description="UPF0391 membrane protein BAV1230">
    <location>
        <begin position="1"/>
        <end position="54"/>
    </location>
</feature>
<feature type="transmembrane region" description="Helical" evidence="1">
    <location>
        <begin position="5"/>
        <end position="25"/>
    </location>
</feature>
<feature type="transmembrane region" description="Helical" evidence="1">
    <location>
        <begin position="27"/>
        <end position="47"/>
    </location>
</feature>
<keyword id="KW-1003">Cell membrane</keyword>
<keyword id="KW-0472">Membrane</keyword>
<keyword id="KW-1185">Reference proteome</keyword>
<keyword id="KW-0812">Transmembrane</keyword>
<keyword id="KW-1133">Transmembrane helix</keyword>
<dbReference type="EMBL" id="AM167904">
    <property type="protein sequence ID" value="CAJ48838.1"/>
    <property type="molecule type" value="Genomic_DNA"/>
</dbReference>
<dbReference type="RefSeq" id="WP_012416912.1">
    <property type="nucleotide sequence ID" value="NC_010645.1"/>
</dbReference>
<dbReference type="STRING" id="360910.BAV1230"/>
<dbReference type="KEGG" id="bav:BAV1230"/>
<dbReference type="eggNOG" id="COG5487">
    <property type="taxonomic scope" value="Bacteria"/>
</dbReference>
<dbReference type="HOGENOM" id="CLU_187346_1_0_4"/>
<dbReference type="Proteomes" id="UP000001977">
    <property type="component" value="Chromosome"/>
</dbReference>
<dbReference type="GO" id="GO:0005886">
    <property type="term" value="C:plasma membrane"/>
    <property type="evidence" value="ECO:0007669"/>
    <property type="project" value="UniProtKB-SubCell"/>
</dbReference>
<dbReference type="HAMAP" id="MF_01361">
    <property type="entry name" value="UPF0391"/>
    <property type="match status" value="1"/>
</dbReference>
<dbReference type="InterPro" id="IPR009760">
    <property type="entry name" value="DUF1328"/>
</dbReference>
<dbReference type="NCBIfam" id="NF010226">
    <property type="entry name" value="PRK13682.1-1"/>
    <property type="match status" value="1"/>
</dbReference>
<dbReference type="NCBIfam" id="NF010228">
    <property type="entry name" value="PRK13682.1-3"/>
    <property type="match status" value="1"/>
</dbReference>
<dbReference type="NCBIfam" id="NF010229">
    <property type="entry name" value="PRK13682.1-4"/>
    <property type="match status" value="1"/>
</dbReference>
<dbReference type="Pfam" id="PF07043">
    <property type="entry name" value="DUF1328"/>
    <property type="match status" value="1"/>
</dbReference>
<dbReference type="PIRSF" id="PIRSF036466">
    <property type="entry name" value="UCP036466"/>
    <property type="match status" value="1"/>
</dbReference>
<organism>
    <name type="scientific">Bordetella avium (strain 197N)</name>
    <dbReference type="NCBI Taxonomy" id="360910"/>
    <lineage>
        <taxon>Bacteria</taxon>
        <taxon>Pseudomonadati</taxon>
        <taxon>Pseudomonadota</taxon>
        <taxon>Betaproteobacteria</taxon>
        <taxon>Burkholderiales</taxon>
        <taxon>Alcaligenaceae</taxon>
        <taxon>Bordetella</taxon>
    </lineage>
</organism>
<accession>Q2L113</accession>
<gene>
    <name type="ordered locus">BAV1230</name>
</gene>
<evidence type="ECO:0000255" key="1">
    <source>
        <dbReference type="HAMAP-Rule" id="MF_01361"/>
    </source>
</evidence>
<comment type="subcellular location">
    <subcellularLocation>
        <location evidence="1">Cell membrane</location>
        <topology evidence="1">Multi-pass membrane protein</topology>
    </subcellularLocation>
</comment>
<comment type="similarity">
    <text evidence="1">Belongs to the UPF0391 family.</text>
</comment>